<sequence>MQSNRRSGKSAGSRMVSCFTRLALLAALAASGASLARADEYRLGVMDKLRVRVAEWQTAEGAVRDWSAVSGDYTVGPSGSLSLPFVGDLPASGKTTSEVAEEIGVKMQKLFGLRDRPSASVEMAQYRPVYLSGEVQTPGEYPYAPNLTVLKAVSLGGGLRRADNGQRFARDYINASGESAVQVAERSRLLIRRARLLAEIGKRDTIPMPEELKNVPDAEKLLDSETALMESRDKRQKRQLDALADLRSLLQSEIEALAKKAETQARQLELATEDRDKVDSLAEKGLALSQRKLSLEQRVADVQASLLDIDTASLKAKQDASKAAQDETNLRNDWDAQLAQELQNTEAELDTLTLKLGTSRDLMTEALLQSADAAQLEEQAAEITYSIIRDKDGKPTEIAADENTPVLPGDVIKVNTALAMR</sequence>
<evidence type="ECO:0000255" key="1"/>
<evidence type="ECO:0000305" key="2"/>
<gene>
    <name type="primary">exoF</name>
    <name type="ordered locus">RB1068</name>
    <name type="ORF">SMb20945</name>
</gene>
<proteinExistence type="inferred from homology"/>
<protein>
    <recommendedName>
        <fullName>Exopolysaccharide production protein ExoF</fullName>
    </recommendedName>
</protein>
<feature type="signal peptide" evidence="1">
    <location>
        <begin position="1"/>
        <end position="31"/>
    </location>
</feature>
<feature type="chain" id="PRO_0000021216" description="Exopolysaccharide production protein ExoF">
    <location>
        <begin position="32"/>
        <end position="421"/>
    </location>
</feature>
<reference key="1">
    <citation type="journal article" date="1993" name="Mol. Plant Microbe Interact.">
        <title>Genetic analysis of the Rhizobium meliloti exoYFQ operon: ExoY is homologous to sugar transferases and ExoQ represents a transmembrane protein.</title>
        <authorList>
            <person name="Mueller P."/>
            <person name="Keller M."/>
            <person name="Weng W.M."/>
            <person name="Quandt J."/>
            <person name="Arnold W."/>
            <person name="Puehler A."/>
        </authorList>
    </citation>
    <scope>NUCLEOTIDE SEQUENCE [GENOMIC DNA]</scope>
    <source>
        <strain>RCR2011 / SU47</strain>
    </source>
</reference>
<reference key="2">
    <citation type="journal article" date="2001" name="Proc. Natl. Acad. Sci. U.S.A.">
        <title>The complete sequence of the 1,683-kb pSymB megaplasmid from the N2-fixing endosymbiont Sinorhizobium meliloti.</title>
        <authorList>
            <person name="Finan T.M."/>
            <person name="Weidner S."/>
            <person name="Wong K."/>
            <person name="Buhrmester J."/>
            <person name="Chain P."/>
            <person name="Vorhoelter F.J."/>
            <person name="Hernandez-Lucas I."/>
            <person name="Becker A."/>
            <person name="Cowie A."/>
            <person name="Gouzy J."/>
            <person name="Golding B."/>
            <person name="Puehler A."/>
        </authorList>
    </citation>
    <scope>NUCLEOTIDE SEQUENCE [LARGE SCALE GENOMIC DNA]</scope>
    <source>
        <strain>1021</strain>
    </source>
</reference>
<reference key="3">
    <citation type="journal article" date="2001" name="Science">
        <title>The composite genome of the legume symbiont Sinorhizobium meliloti.</title>
        <authorList>
            <person name="Galibert F."/>
            <person name="Finan T.M."/>
            <person name="Long S.R."/>
            <person name="Puehler A."/>
            <person name="Abola P."/>
            <person name="Ampe F."/>
            <person name="Barloy-Hubler F."/>
            <person name="Barnett M.J."/>
            <person name="Becker A."/>
            <person name="Boistard P."/>
            <person name="Bothe G."/>
            <person name="Boutry M."/>
            <person name="Bowser L."/>
            <person name="Buhrmester J."/>
            <person name="Cadieu E."/>
            <person name="Capela D."/>
            <person name="Chain P."/>
            <person name="Cowie A."/>
            <person name="Davis R.W."/>
            <person name="Dreano S."/>
            <person name="Federspiel N.A."/>
            <person name="Fisher R.F."/>
            <person name="Gloux S."/>
            <person name="Godrie T."/>
            <person name="Goffeau A."/>
            <person name="Golding B."/>
            <person name="Gouzy J."/>
            <person name="Gurjal M."/>
            <person name="Hernandez-Lucas I."/>
            <person name="Hong A."/>
            <person name="Huizar L."/>
            <person name="Hyman R.W."/>
            <person name="Jones T."/>
            <person name="Kahn D."/>
            <person name="Kahn M.L."/>
            <person name="Kalman S."/>
            <person name="Keating D.H."/>
            <person name="Kiss E."/>
            <person name="Komp C."/>
            <person name="Lelaure V."/>
            <person name="Masuy D."/>
            <person name="Palm C."/>
            <person name="Peck M.C."/>
            <person name="Pohl T.M."/>
            <person name="Portetelle D."/>
            <person name="Purnelle B."/>
            <person name="Ramsperger U."/>
            <person name="Surzycki R."/>
            <person name="Thebault P."/>
            <person name="Vandenbol M."/>
            <person name="Vorhoelter F.J."/>
            <person name="Weidner S."/>
            <person name="Wells D.H."/>
            <person name="Wong K."/>
            <person name="Yeh K.-C."/>
            <person name="Batut J."/>
        </authorList>
    </citation>
    <scope>NUCLEOTIDE SEQUENCE [LARGE SCALE GENOMIC DNA]</scope>
    <source>
        <strain>1021</strain>
    </source>
</reference>
<accession>Q02728</accession>
<comment type="function">
    <text>Involved in succinoglycan (EPS I) synthesis. Needed for the addition of the first sugar (galactose) to the isoprenoid carrier.</text>
</comment>
<comment type="pathway">
    <text>Glycan metabolism; exopolysaccharide biosynthesis.</text>
</comment>
<comment type="subcellular location">
    <subcellularLocation>
        <location evidence="2">Periplasm</location>
    </subcellularLocation>
</comment>
<organism>
    <name type="scientific">Rhizobium meliloti (strain 1021)</name>
    <name type="common">Ensifer meliloti</name>
    <name type="synonym">Sinorhizobium meliloti</name>
    <dbReference type="NCBI Taxonomy" id="266834"/>
    <lineage>
        <taxon>Bacteria</taxon>
        <taxon>Pseudomonadati</taxon>
        <taxon>Pseudomonadota</taxon>
        <taxon>Alphaproteobacteria</taxon>
        <taxon>Hyphomicrobiales</taxon>
        <taxon>Rhizobiaceae</taxon>
        <taxon>Sinorhizobium/Ensifer group</taxon>
        <taxon>Sinorhizobium</taxon>
    </lineage>
</organism>
<dbReference type="EMBL" id="L05588">
    <property type="protein sequence ID" value="AAA26265.1"/>
    <property type="molecule type" value="Genomic_DNA"/>
</dbReference>
<dbReference type="EMBL" id="AL591985">
    <property type="protein sequence ID" value="CAC49468.1"/>
    <property type="molecule type" value="Genomic_DNA"/>
</dbReference>
<dbReference type="PIR" id="D95975">
    <property type="entry name" value="D95975"/>
</dbReference>
<dbReference type="RefSeq" id="NP_437608.1">
    <property type="nucleotide sequence ID" value="NC_003078.1"/>
</dbReference>
<dbReference type="RefSeq" id="WP_010975906.1">
    <property type="nucleotide sequence ID" value="NC_003078.1"/>
</dbReference>
<dbReference type="SMR" id="Q02728"/>
<dbReference type="TCDB" id="1.B.18.1.1">
    <property type="family name" value="the outer membrane auxiliary (oma) protein family"/>
</dbReference>
<dbReference type="EnsemblBacteria" id="CAC49468">
    <property type="protein sequence ID" value="CAC49468"/>
    <property type="gene ID" value="SM_b20945"/>
</dbReference>
<dbReference type="GeneID" id="89577831"/>
<dbReference type="KEGG" id="sme:SM_b20945"/>
<dbReference type="PATRIC" id="fig|266834.11.peg.5997"/>
<dbReference type="eggNOG" id="COG1596">
    <property type="taxonomic scope" value="Bacteria"/>
</dbReference>
<dbReference type="HOGENOM" id="CLU_037300_1_0_5"/>
<dbReference type="OrthoDB" id="9798876at2"/>
<dbReference type="UniPathway" id="UPA00631"/>
<dbReference type="Proteomes" id="UP000001976">
    <property type="component" value="Plasmid pSymB"/>
</dbReference>
<dbReference type="GO" id="GO:0042597">
    <property type="term" value="C:periplasmic space"/>
    <property type="evidence" value="ECO:0007669"/>
    <property type="project" value="UniProtKB-SubCell"/>
</dbReference>
<dbReference type="GO" id="GO:0015159">
    <property type="term" value="F:polysaccharide transmembrane transporter activity"/>
    <property type="evidence" value="ECO:0007669"/>
    <property type="project" value="InterPro"/>
</dbReference>
<dbReference type="GO" id="GO:0000271">
    <property type="term" value="P:polysaccharide biosynthetic process"/>
    <property type="evidence" value="ECO:0007669"/>
    <property type="project" value="UniProtKB-KW"/>
</dbReference>
<dbReference type="Gene3D" id="3.30.1950.10">
    <property type="entry name" value="wza like domain"/>
    <property type="match status" value="1"/>
</dbReference>
<dbReference type="InterPro" id="IPR049712">
    <property type="entry name" value="Poly_export"/>
</dbReference>
<dbReference type="InterPro" id="IPR003715">
    <property type="entry name" value="Poly_export_N"/>
</dbReference>
<dbReference type="InterPro" id="IPR019554">
    <property type="entry name" value="Soluble_ligand-bd"/>
</dbReference>
<dbReference type="PANTHER" id="PTHR33619">
    <property type="entry name" value="POLYSACCHARIDE EXPORT PROTEIN GFCE-RELATED"/>
    <property type="match status" value="1"/>
</dbReference>
<dbReference type="PANTHER" id="PTHR33619:SF3">
    <property type="entry name" value="POLYSACCHARIDE EXPORT PROTEIN GFCE-RELATED"/>
    <property type="match status" value="1"/>
</dbReference>
<dbReference type="Pfam" id="PF02563">
    <property type="entry name" value="Poly_export"/>
    <property type="match status" value="1"/>
</dbReference>
<dbReference type="Pfam" id="PF10531">
    <property type="entry name" value="SLBB"/>
    <property type="match status" value="1"/>
</dbReference>
<keyword id="KW-0270">Exopolysaccharide synthesis</keyword>
<keyword id="KW-0574">Periplasm</keyword>
<keyword id="KW-0614">Plasmid</keyword>
<keyword id="KW-1185">Reference proteome</keyword>
<keyword id="KW-0732">Signal</keyword>
<geneLocation type="plasmid">
    <name>pSymB</name>
    <name>megaplasmid 2</name>
</geneLocation>
<name>EXOF_RHIME</name>